<accession>P0CY46</accession>
<sequence length="1292" mass="144362">MYNNYNLCHIRTINWEEIITGPSAMYSYVYNFTSPERACTPCDKSCEQGCWGEGPENCQKYSKTNCSPQCWQGRCFGPNPRECCHLFCAGGCTGPKQSDCIACKNFFDDGVCTQECPPMQKYNPTTYSWEPNPDGKYAYGATCVRRCPEHLLKDNGACVRSCPPKKKALNGECVPCDGPCPKTCKGVEKVHSGNIDSFKDCTIIEGSITILDQSFQGFQHVYRNFSFGKRYEKMHPDKLEVFSTLKEITGFLNIQGDHKDFKNLSYFRNLEVIGGRTLTEYFASLYVVKTSLVSFGLSSLKKIYSGSIAILENKNLCYAQSINWTRIKKSSEHESLLSNNRNESECIKDGLVCDEQCSDEGCWGPGPAQCLSCKNFILGNDCLQDCTAPGIYQADEKTCKVCHEECDGSCIGPNTDHCKKCKHARDGPFCVPECPASKYNDNGVCKSCHGNCVGGCEGPENNIGPNGCHSCDKAILNDHVPEGCLQKKESCPDGYYYEWVSPLEQGPLKPLASKAVCRKCHSRCKKCTGYGFHEHVCQECTKYKRGEQCEDECPADYFADANKLCIPCFSECRGCFGPGPNQCYKCRNYKIYIDEDTDGNTTSFNCTETCTPEYPHKIFNPDSEPYCSLETAGLIENELQPAILAGVAVFALAFLVVAAIIMYFWRVRAKAKENTVKMTMALTGLDDNEPLRPTGVKPNLAKLRIIKEEEMRKGGILGYGAFGNVYKGVWVPEGENVKIPVAIKVLHDGTGANTSKEFLDEAYIMASVEHPNLLQLLAVCMTSQMMLVTQLMPLGCLLDFVRRFKDKIGSKALLNWCTQIARGMAYLEERRLVHRDLAARNVLVQTPNCVKITDFGLAKLLDINEEQYKAAGGKMPIKWLALECIQHRVFTHKSDVWAFGVTIWEVLTYGGRPYENVPARNVPELLEKGERLPQPAICTIDVYMIMIKCWMLDAESRPSFKELAEDFAKMSRDPGRYLAIKGDKYMRLPSYTLQDEKEMIRNLASAMDGPEALVDADEYLQPKSRAPIPPGLSASSTSGSPPNTPVKPCWPNGKPLAADSPTPQNQQNWDRELLRYGANHRNGNVSSHEPGNSAQHGHYTPPNGHCGHVVGSDSTASRYCSDPLKMIDVRDCDVTDDCFDGEVNSAHQQAQVGNLKLDLPLDEDDYLMPSPQLPTNTTQYMDLIGDSKPTEMEPKRVNNGYRKYPEFLTIQGKTSLDNPEYIMSQDEGPLTPQTIGIPTPDLEKVLTNGTFGSQVRQRSSEEESDHEYYNDFDRLERELQPLKPLRKNETTV</sequence>
<proteinExistence type="evidence at transcript level"/>
<evidence type="ECO:0000250" key="1"/>
<evidence type="ECO:0000255" key="2"/>
<evidence type="ECO:0000255" key="3">
    <source>
        <dbReference type="PROSITE-ProRule" id="PRU00159"/>
    </source>
</evidence>
<evidence type="ECO:0000255" key="4">
    <source>
        <dbReference type="PROSITE-ProRule" id="PRU10028"/>
    </source>
</evidence>
<evidence type="ECO:0000256" key="5">
    <source>
        <dbReference type="SAM" id="MobiDB-lite"/>
    </source>
</evidence>
<evidence type="ECO:0000269" key="6">
    <source>
    </source>
</evidence>
<reference key="1">
    <citation type="journal article" date="2011" name="Nature">
        <title>Royalactin induces queen differentiation in honeybees.</title>
        <authorList>
            <person name="Kamakura M."/>
        </authorList>
    </citation>
    <scope>NUCLEOTIDE SEQUENCE [MRNA]</scope>
    <scope>FUNCTION</scope>
    <scope>DISRUPTION PHENOTYPE</scope>
    <scope>ACTIVITY REGULATION</scope>
</reference>
<dbReference type="EC" id="2.7.10.1"/>
<dbReference type="SMR" id="P0CY46"/>
<dbReference type="FunCoup" id="P0CY46">
    <property type="interactions" value="564"/>
</dbReference>
<dbReference type="STRING" id="7460.P0CY46"/>
<dbReference type="GlyCosmos" id="P0CY46">
    <property type="glycosylation" value="7 sites, No reported glycans"/>
</dbReference>
<dbReference type="PaxDb" id="7460-GB54477-PA"/>
<dbReference type="EnsemblMetazoa" id="XM_026441434">
    <property type="protein sequence ID" value="XP_026297219"/>
    <property type="gene ID" value="LOC100577393"/>
</dbReference>
<dbReference type="eggNOG" id="KOG1025">
    <property type="taxonomic scope" value="Eukaryota"/>
</dbReference>
<dbReference type="InParanoid" id="P0CY46"/>
<dbReference type="OrthoDB" id="6219513at2759"/>
<dbReference type="Proteomes" id="UP000005203">
    <property type="component" value="Unplaced"/>
</dbReference>
<dbReference type="GO" id="GO:0009925">
    <property type="term" value="C:basal plasma membrane"/>
    <property type="evidence" value="ECO:0007669"/>
    <property type="project" value="TreeGrafter"/>
</dbReference>
<dbReference type="GO" id="GO:0043235">
    <property type="term" value="C:receptor complex"/>
    <property type="evidence" value="ECO:0007669"/>
    <property type="project" value="TreeGrafter"/>
</dbReference>
<dbReference type="GO" id="GO:0005524">
    <property type="term" value="F:ATP binding"/>
    <property type="evidence" value="ECO:0007669"/>
    <property type="project" value="UniProtKB-KW"/>
</dbReference>
<dbReference type="GO" id="GO:0004714">
    <property type="term" value="F:transmembrane receptor protein tyrosine kinase activity"/>
    <property type="evidence" value="ECO:0007669"/>
    <property type="project" value="UniProtKB-EC"/>
</dbReference>
<dbReference type="GO" id="GO:0038127">
    <property type="term" value="P:ERBB signaling pathway"/>
    <property type="evidence" value="ECO:0007669"/>
    <property type="project" value="UniProtKB-ARBA"/>
</dbReference>
<dbReference type="GO" id="GO:0043066">
    <property type="term" value="P:negative regulation of apoptotic process"/>
    <property type="evidence" value="ECO:0007669"/>
    <property type="project" value="TreeGrafter"/>
</dbReference>
<dbReference type="GO" id="GO:0022008">
    <property type="term" value="P:neurogenesis"/>
    <property type="evidence" value="ECO:0007669"/>
    <property type="project" value="TreeGrafter"/>
</dbReference>
<dbReference type="GO" id="GO:0008284">
    <property type="term" value="P:positive regulation of cell population proliferation"/>
    <property type="evidence" value="ECO:0007669"/>
    <property type="project" value="TreeGrafter"/>
</dbReference>
<dbReference type="GO" id="GO:0009966">
    <property type="term" value="P:regulation of signal transduction"/>
    <property type="evidence" value="ECO:0007669"/>
    <property type="project" value="UniProtKB-ARBA"/>
</dbReference>
<dbReference type="CDD" id="cd00064">
    <property type="entry name" value="FU"/>
    <property type="match status" value="5"/>
</dbReference>
<dbReference type="CDD" id="cd05057">
    <property type="entry name" value="PTKc_EGFR_like"/>
    <property type="match status" value="1"/>
</dbReference>
<dbReference type="FunFam" id="2.10.220.10:FF:000001">
    <property type="entry name" value="Receptor protein-tyrosine kinase"/>
    <property type="match status" value="1"/>
</dbReference>
<dbReference type="FunFam" id="2.10.220.10:FF:000024">
    <property type="entry name" value="Receptor protein-tyrosine kinase"/>
    <property type="match status" value="1"/>
</dbReference>
<dbReference type="FunFam" id="3.30.200.20:FF:000422">
    <property type="entry name" value="Receptor protein-tyrosine kinase"/>
    <property type="match status" value="1"/>
</dbReference>
<dbReference type="FunFam" id="3.80.20.20:FF:000009">
    <property type="entry name" value="Receptor protein-tyrosine kinase"/>
    <property type="match status" value="1"/>
</dbReference>
<dbReference type="FunFam" id="1.10.510.10:FF:000233">
    <property type="entry name" value="receptor tyrosine-protein kinase erbB-3"/>
    <property type="match status" value="1"/>
</dbReference>
<dbReference type="Gene3D" id="2.10.220.10">
    <property type="entry name" value="Hormone Receptor, Insulin-like Growth Factor Receptor 1, Chain A, domain 2"/>
    <property type="match status" value="3"/>
</dbReference>
<dbReference type="Gene3D" id="3.30.200.20">
    <property type="entry name" value="Phosphorylase Kinase, domain 1"/>
    <property type="match status" value="1"/>
</dbReference>
<dbReference type="Gene3D" id="3.80.20.20">
    <property type="entry name" value="Receptor L-domain"/>
    <property type="match status" value="2"/>
</dbReference>
<dbReference type="Gene3D" id="1.10.510.10">
    <property type="entry name" value="Transferase(Phosphotransferase) domain 1"/>
    <property type="match status" value="1"/>
</dbReference>
<dbReference type="InterPro" id="IPR006211">
    <property type="entry name" value="Furin-like_Cys-rich_dom"/>
</dbReference>
<dbReference type="InterPro" id="IPR006212">
    <property type="entry name" value="Furin_repeat"/>
</dbReference>
<dbReference type="InterPro" id="IPR032778">
    <property type="entry name" value="GF_recep_IV"/>
</dbReference>
<dbReference type="InterPro" id="IPR009030">
    <property type="entry name" value="Growth_fac_rcpt_cys_sf"/>
</dbReference>
<dbReference type="InterPro" id="IPR011009">
    <property type="entry name" value="Kinase-like_dom_sf"/>
</dbReference>
<dbReference type="InterPro" id="IPR000719">
    <property type="entry name" value="Prot_kinase_dom"/>
</dbReference>
<dbReference type="InterPro" id="IPR017441">
    <property type="entry name" value="Protein_kinase_ATP_BS"/>
</dbReference>
<dbReference type="InterPro" id="IPR000494">
    <property type="entry name" value="Rcpt_L-dom"/>
</dbReference>
<dbReference type="InterPro" id="IPR036941">
    <property type="entry name" value="Rcpt_L-dom_sf"/>
</dbReference>
<dbReference type="InterPro" id="IPR050122">
    <property type="entry name" value="RTK"/>
</dbReference>
<dbReference type="InterPro" id="IPR001245">
    <property type="entry name" value="Ser-Thr/Tyr_kinase_cat_dom"/>
</dbReference>
<dbReference type="InterPro" id="IPR008266">
    <property type="entry name" value="Tyr_kinase_AS"/>
</dbReference>
<dbReference type="InterPro" id="IPR020635">
    <property type="entry name" value="Tyr_kinase_cat_dom"/>
</dbReference>
<dbReference type="InterPro" id="IPR016245">
    <property type="entry name" value="Tyr_kinase_EGF/ERB/XmrK_rcpt"/>
</dbReference>
<dbReference type="PANTHER" id="PTHR24416:SF566">
    <property type="entry name" value="EPIDERMAL GROWTH FACTOR RECEPTOR"/>
    <property type="match status" value="1"/>
</dbReference>
<dbReference type="PANTHER" id="PTHR24416">
    <property type="entry name" value="TYROSINE-PROTEIN KINASE RECEPTOR"/>
    <property type="match status" value="1"/>
</dbReference>
<dbReference type="Pfam" id="PF00757">
    <property type="entry name" value="Furin-like"/>
    <property type="match status" value="1"/>
</dbReference>
<dbReference type="Pfam" id="PF14843">
    <property type="entry name" value="GF_recep_IV"/>
    <property type="match status" value="1"/>
</dbReference>
<dbReference type="Pfam" id="PF07714">
    <property type="entry name" value="PK_Tyr_Ser-Thr"/>
    <property type="match status" value="1"/>
</dbReference>
<dbReference type="Pfam" id="PF01030">
    <property type="entry name" value="Recep_L_domain"/>
    <property type="match status" value="1"/>
</dbReference>
<dbReference type="PIRSF" id="PIRSF000619">
    <property type="entry name" value="TyrPK_EGF-R"/>
    <property type="match status" value="1"/>
</dbReference>
<dbReference type="PRINTS" id="PR00109">
    <property type="entry name" value="TYRKINASE"/>
</dbReference>
<dbReference type="SMART" id="SM00261">
    <property type="entry name" value="FU"/>
    <property type="match status" value="7"/>
</dbReference>
<dbReference type="SMART" id="SM00219">
    <property type="entry name" value="TyrKc"/>
    <property type="match status" value="1"/>
</dbReference>
<dbReference type="SUPFAM" id="SSF57184">
    <property type="entry name" value="Growth factor receptor domain"/>
    <property type="match status" value="3"/>
</dbReference>
<dbReference type="SUPFAM" id="SSF52058">
    <property type="entry name" value="L domain-like"/>
    <property type="match status" value="1"/>
</dbReference>
<dbReference type="SUPFAM" id="SSF56112">
    <property type="entry name" value="Protein kinase-like (PK-like)"/>
    <property type="match status" value="1"/>
</dbReference>
<dbReference type="PROSITE" id="PS00107">
    <property type="entry name" value="PROTEIN_KINASE_ATP"/>
    <property type="match status" value="1"/>
</dbReference>
<dbReference type="PROSITE" id="PS50011">
    <property type="entry name" value="PROTEIN_KINASE_DOM"/>
    <property type="match status" value="1"/>
</dbReference>
<dbReference type="PROSITE" id="PS00109">
    <property type="entry name" value="PROTEIN_KINASE_TYR"/>
    <property type="match status" value="1"/>
</dbReference>
<gene>
    <name type="primary">Egfr</name>
</gene>
<comment type="function">
    <text evidence="1 6">Upon binding to its ligands, transduces the signal through the ras-raf-MAPK pathway and is involved in a myriad of developmental decisions (By similarity). Involved in the determination of adult size, ovary development, and development timing, especially during queen determination of honeybee larvae. May have an important role in the prolongation of longevity in queens.</text>
</comment>
<comment type="catalytic activity">
    <reaction evidence="4">
        <text>L-tyrosyl-[protein] + ATP = O-phospho-L-tyrosyl-[protein] + ADP + H(+)</text>
        <dbReference type="Rhea" id="RHEA:10596"/>
        <dbReference type="Rhea" id="RHEA-COMP:10136"/>
        <dbReference type="Rhea" id="RHEA-COMP:20101"/>
        <dbReference type="ChEBI" id="CHEBI:15378"/>
        <dbReference type="ChEBI" id="CHEBI:30616"/>
        <dbReference type="ChEBI" id="CHEBI:46858"/>
        <dbReference type="ChEBI" id="CHEBI:61978"/>
        <dbReference type="ChEBI" id="CHEBI:456216"/>
        <dbReference type="EC" id="2.7.10.1"/>
    </reaction>
</comment>
<comment type="activity regulation">
    <text evidence="6">Activated by MRJP1 during queen determination of honeybee larvae.</text>
</comment>
<comment type="subcellular location">
    <subcellularLocation>
        <location evidence="1">Membrane</location>
        <topology evidence="1">Single-pass type I membrane protein</topology>
    </subcellularLocation>
</comment>
<comment type="disruption phenotype">
    <text evidence="6">Reduced adult size and ovary size, and prolonged developmental time.</text>
</comment>
<comment type="similarity">
    <text evidence="3">Belongs to the protein kinase superfamily. Tyr protein kinase family. EGF receptor subfamily.</text>
</comment>
<protein>
    <recommendedName>
        <fullName>Epidermal growth factor receptor</fullName>
        <shortName>Egfr</shortName>
        <ecNumber>2.7.10.1</ecNumber>
    </recommendedName>
</protein>
<feature type="chain" id="PRO_0000409832" description="Epidermal growth factor receptor">
    <location>
        <begin position="1"/>
        <end position="1292"/>
    </location>
</feature>
<feature type="topological domain" description="Extracellular" evidence="2">
    <location>
        <begin position="1"/>
        <end position="641"/>
    </location>
</feature>
<feature type="transmembrane region" description="Helical" evidence="2">
    <location>
        <begin position="642"/>
        <end position="662"/>
    </location>
</feature>
<feature type="topological domain" description="Cytoplasmic" evidence="2">
    <location>
        <begin position="663"/>
        <end position="1292"/>
    </location>
</feature>
<feature type="domain" description="Protein kinase" evidence="3">
    <location>
        <begin position="711"/>
        <end position="978"/>
    </location>
</feature>
<feature type="region of interest" description="Disordered" evidence="5">
    <location>
        <begin position="1022"/>
        <end position="1066"/>
    </location>
</feature>
<feature type="region of interest" description="Disordered" evidence="5">
    <location>
        <begin position="1253"/>
        <end position="1292"/>
    </location>
</feature>
<feature type="compositionally biased region" description="Basic and acidic residues" evidence="5">
    <location>
        <begin position="1258"/>
        <end position="1292"/>
    </location>
</feature>
<feature type="active site" description="Proton acceptor" evidence="3 4">
    <location>
        <position position="836"/>
    </location>
</feature>
<feature type="binding site" evidence="3">
    <location>
        <begin position="717"/>
        <end position="725"/>
    </location>
    <ligand>
        <name>ATP</name>
        <dbReference type="ChEBI" id="CHEBI:30616"/>
    </ligand>
</feature>
<feature type="binding site" evidence="3">
    <location>
        <position position="744"/>
    </location>
    <ligand>
        <name>ATP</name>
        <dbReference type="ChEBI" id="CHEBI:30616"/>
    </ligand>
</feature>
<feature type="modified residue" description="Phosphothreonine; by PKC" evidence="1">
    <location>
        <position position="675"/>
    </location>
</feature>
<feature type="modified residue" description="Phosphotyrosine; by autocatalysis" evidence="1">
    <location>
        <position position="1166"/>
    </location>
</feature>
<feature type="glycosylation site" description="N-linked (GlcNAc...) asparagine" evidence="2">
    <location>
        <position position="31"/>
    </location>
</feature>
<feature type="glycosylation site" description="N-linked (GlcNAc...) asparagine" evidence="2">
    <location>
        <position position="224"/>
    </location>
</feature>
<feature type="glycosylation site" description="N-linked (GlcNAc...) asparagine" evidence="2">
    <location>
        <position position="263"/>
    </location>
</feature>
<feature type="glycosylation site" description="N-linked (GlcNAc...) asparagine" evidence="2">
    <location>
        <position position="323"/>
    </location>
</feature>
<feature type="glycosylation site" description="N-linked (GlcNAc...) asparagine" evidence="2">
    <location>
        <position position="342"/>
    </location>
</feature>
<feature type="glycosylation site" description="N-linked (GlcNAc...) asparagine" evidence="2">
    <location>
        <position position="600"/>
    </location>
</feature>
<feature type="glycosylation site" description="N-linked (GlcNAc...) asparagine" evidence="2">
    <location>
        <position position="605"/>
    </location>
</feature>
<name>EGFR_APIME</name>
<keyword id="KW-0067">ATP-binding</keyword>
<keyword id="KW-0217">Developmental protein</keyword>
<keyword id="KW-0325">Glycoprotein</keyword>
<keyword id="KW-0418">Kinase</keyword>
<keyword id="KW-0472">Membrane</keyword>
<keyword id="KW-0547">Nucleotide-binding</keyword>
<keyword id="KW-0597">Phosphoprotein</keyword>
<keyword id="KW-0675">Receptor</keyword>
<keyword id="KW-1185">Reference proteome</keyword>
<keyword id="KW-0808">Transferase</keyword>
<keyword id="KW-0812">Transmembrane</keyword>
<keyword id="KW-1133">Transmembrane helix</keyword>
<keyword id="KW-0829">Tyrosine-protein kinase</keyword>
<organism>
    <name type="scientific">Apis mellifera</name>
    <name type="common">Honeybee</name>
    <dbReference type="NCBI Taxonomy" id="7460"/>
    <lineage>
        <taxon>Eukaryota</taxon>
        <taxon>Metazoa</taxon>
        <taxon>Ecdysozoa</taxon>
        <taxon>Arthropoda</taxon>
        <taxon>Hexapoda</taxon>
        <taxon>Insecta</taxon>
        <taxon>Pterygota</taxon>
        <taxon>Neoptera</taxon>
        <taxon>Endopterygota</taxon>
        <taxon>Hymenoptera</taxon>
        <taxon>Apocrita</taxon>
        <taxon>Aculeata</taxon>
        <taxon>Apoidea</taxon>
        <taxon>Anthophila</taxon>
        <taxon>Apidae</taxon>
        <taxon>Apis</taxon>
    </lineage>
</organism>